<reference key="1">
    <citation type="journal article" date="1996" name="DNA Res.">
        <title>Sequence analysis of the genome of the unicellular cyanobacterium Synechocystis sp. strain PCC6803. II. Sequence determination of the entire genome and assignment of potential protein-coding regions.</title>
        <authorList>
            <person name="Kaneko T."/>
            <person name="Sato S."/>
            <person name="Kotani H."/>
            <person name="Tanaka A."/>
            <person name="Asamizu E."/>
            <person name="Nakamura Y."/>
            <person name="Miyajima N."/>
            <person name="Hirosawa M."/>
            <person name="Sugiura M."/>
            <person name="Sasamoto S."/>
            <person name="Kimura T."/>
            <person name="Hosouchi T."/>
            <person name="Matsuno A."/>
            <person name="Muraki A."/>
            <person name="Nakazaki N."/>
            <person name="Naruo K."/>
            <person name="Okumura S."/>
            <person name="Shimpo S."/>
            <person name="Takeuchi C."/>
            <person name="Wada T."/>
            <person name="Watanabe A."/>
            <person name="Yamada M."/>
            <person name="Yasuda M."/>
            <person name="Tabata S."/>
        </authorList>
    </citation>
    <scope>NUCLEOTIDE SEQUENCE [LARGE SCALE GENOMIC DNA]</scope>
    <source>
        <strain>ATCC 27184 / PCC 6803 / Kazusa</strain>
    </source>
</reference>
<sequence>MINNEAFNLSLEQKFQLQCLQQEYQELDREQTVNYLLETMQQIMVRDNLIRDLMKNSLLP</sequence>
<dbReference type="EMBL" id="BA000022">
    <property type="protein sequence ID" value="BAA17954.1"/>
    <property type="molecule type" value="Genomic_DNA"/>
</dbReference>
<dbReference type="PIR" id="S75092">
    <property type="entry name" value="S75092"/>
</dbReference>
<dbReference type="SMR" id="P73890"/>
<dbReference type="IntAct" id="P73890">
    <property type="interactions" value="1"/>
</dbReference>
<dbReference type="STRING" id="1148.gene:10498823"/>
<dbReference type="PaxDb" id="1148-1653037"/>
<dbReference type="EnsemblBacteria" id="BAA17954">
    <property type="protein sequence ID" value="BAA17954"/>
    <property type="gene ID" value="BAA17954"/>
</dbReference>
<dbReference type="KEGG" id="syn:ssl0453"/>
<dbReference type="eggNOG" id="ENOG5031UKY">
    <property type="taxonomic scope" value="Bacteria"/>
</dbReference>
<dbReference type="InParanoid" id="P73890"/>
<dbReference type="Proteomes" id="UP000001425">
    <property type="component" value="Chromosome"/>
</dbReference>
<dbReference type="Gene3D" id="1.10.287.670">
    <property type="entry name" value="Phycobilisome degradation protein NblA"/>
    <property type="match status" value="1"/>
</dbReference>
<dbReference type="InterPro" id="IPR007574">
    <property type="entry name" value="NblA"/>
</dbReference>
<dbReference type="InterPro" id="IPR036904">
    <property type="entry name" value="NblA_sf"/>
</dbReference>
<dbReference type="Pfam" id="PF04485">
    <property type="entry name" value="NblA"/>
    <property type="match status" value="1"/>
</dbReference>
<dbReference type="SUPFAM" id="SSF109859">
    <property type="entry name" value="NblA-like"/>
    <property type="match status" value="1"/>
</dbReference>
<feature type="chain" id="PRO_0000096743" description="Phycobilisome degradation protein NblA homolog 2">
    <location>
        <begin position="1"/>
        <end position="60"/>
    </location>
</feature>
<organism>
    <name type="scientific">Synechocystis sp. (strain ATCC 27184 / PCC 6803 / Kazusa)</name>
    <dbReference type="NCBI Taxonomy" id="1111708"/>
    <lineage>
        <taxon>Bacteria</taxon>
        <taxon>Bacillati</taxon>
        <taxon>Cyanobacteriota</taxon>
        <taxon>Cyanophyceae</taxon>
        <taxon>Synechococcales</taxon>
        <taxon>Merismopediaceae</taxon>
        <taxon>Synechocystis</taxon>
    </lineage>
</organism>
<evidence type="ECO:0000305" key="1"/>
<protein>
    <recommendedName>
        <fullName>Phycobilisome degradation protein NblA homolog 2</fullName>
    </recommendedName>
</protein>
<proteinExistence type="predicted"/>
<comment type="similarity">
    <text evidence="1">To Synechococcus PCC 7942 NblA and some, to chloroplast ycf18.</text>
</comment>
<accession>P73890</accession>
<name>NBLA2_SYNY3</name>
<keyword id="KW-1185">Reference proteome</keyword>
<gene>
    <name type="ordered locus">ssl0453</name>
</gene>